<sequence>MLEALKPAEGATFTYIKGRLIKQQAAVENPILPFPIFFLIKQNKVFLIKSFQSSQKCEFCGDFFANSHTCSVRRRDFYFHHINFKSSEWWSQISFQPIGSCDDTKRFFLTYDVETYTWHGKHGKQLVPFMLVFHLSGELELVSLSANIAEQQRWLAWDTPHTYYYVSPIKGEIGKAFKDLRYEIQKQVTRLLWDNFVGENPELAEIQERHHVNHIDDITAEMHKIKTKGSPQFIEIYVIGHNICGFDEIVLAAQVIHNRTDVLPAFKINRNFMPRNGKILFNDISFCLPNPKYEKRKDFADWECGKLTAADHKYQFVKFMVRDTFALTHTSLRNAAGAYELPVEKGSCPYEAVNEFYRIGSYQQDEDGFPSLRYWKSSEEYQLNKALWREKNVGAYDIIQQTLHYCVQDVLVTSALVNKLQESYKNFIASQVNLPDASFNIFQRPTISSNSHAIFKQILYREVRPNKANLDNVLLAPSHEMYDYVRQSIRGGRCYPTYIGIMEQPIYVYDICGMYASALTHPFPSGQPLNPYERALAATEWIRKLENLEQKIDYFDECLLPGIFTIDADPPDELFLDELPPFCSRKGGRLCWANEPLRGEVATSIDLITLHNRGWAVRILPDERTTIFPEWKCVAKEYVQLNIGAKEKADKEKNQTMRSIAKLLSNALYGSFATKLDNKKIVFSDQLEASASKTIARGNFSIKSSSFIETDNFSAEIMPEFVVTYPPAPSAELDESDENEEHTLFIPKDSHVTYKYKPITFLETEDDDICLHTLENNSPLIENNRYASHIASFVLAWTRVFVSEWAEFLYAEDRGKPLHQRTIKSVYGDTDSLFVTEEGHRLMEQRGKHRIKKNGGKLVFDPKNPSITWLVECETQCEKCKSDAFSSESVFLAPKLYALKNTVCTCCGHVGKGKLRAKGHATTELCYDTLAKCYLSDAQQGSQRFHTSRLSLKRTLATNQSNAAPFTVTETTLTRTVRPWKDKTLVDIDGHRLMPYSKSNPNPRNNDVCWMTLPWNM</sequence>
<keyword id="KW-0235">DNA replication</keyword>
<keyword id="KW-0238">DNA-binding</keyword>
<keyword id="KW-0239">DNA-directed DNA polymerase</keyword>
<keyword id="KW-1048">Host nucleus</keyword>
<keyword id="KW-0548">Nucleotidyltransferase</keyword>
<keyword id="KW-1185">Reference proteome</keyword>
<keyword id="KW-0808">Transferase</keyword>
<keyword id="KW-1194">Viral DNA replication</keyword>
<gene>
    <name evidence="3" type="primary">POL</name>
</gene>
<comment type="function">
    <text evidence="1 2 3">Eukaryotic-type DNA polymerase involved in viral genomic replication. DNA synthesis is protein primed, and acts in a strand displacement replication. Assembles in complex with viral pTP, DBP, host NFIA and host POU2F1/OCT1 on viral origin of replication. The polymerase covalently transfers dCMP onto pTP, thereby initiating complementary strand synthesis.</text>
</comment>
<comment type="catalytic activity">
    <reaction evidence="3">
        <text>DNA(n) + a 2'-deoxyribonucleoside 5'-triphosphate = DNA(n+1) + diphosphate</text>
        <dbReference type="Rhea" id="RHEA:22508"/>
        <dbReference type="Rhea" id="RHEA-COMP:17339"/>
        <dbReference type="Rhea" id="RHEA-COMP:17340"/>
        <dbReference type="ChEBI" id="CHEBI:33019"/>
        <dbReference type="ChEBI" id="CHEBI:61560"/>
        <dbReference type="ChEBI" id="CHEBI:173112"/>
        <dbReference type="EC" id="2.7.7.7"/>
    </reaction>
</comment>
<comment type="subunit">
    <text evidence="2 3">Heterodimer with the terminal protein; this heterodimer binds to bp 9 to 18 of the genome. Forms a complex with viral pTP, DBP and hosts NFIA and POU2F1/OCT1 for initiation of replication.</text>
</comment>
<comment type="subcellular location">
    <subcellularLocation>
        <location evidence="1 3">Host nucleus</location>
    </subcellularLocation>
</comment>
<comment type="miscellaneous">
    <text evidence="3">This DNA polymerase requires a protein as a primer.</text>
</comment>
<comment type="similarity">
    <text evidence="3 4">Belongs to the DNA polymerase type-B family.</text>
</comment>
<name>DPOL_ADEB2</name>
<dbReference type="EC" id="2.7.7.7" evidence="3"/>
<dbReference type="EMBL" id="AF252854">
    <property type="protein sequence ID" value="AAC16239.1"/>
    <property type="molecule type" value="Genomic_DNA"/>
</dbReference>
<dbReference type="RefSeq" id="NP_064286.1">
    <property type="nucleotide sequence ID" value="NC_002513.1"/>
</dbReference>
<dbReference type="KEGG" id="vg:1732721"/>
<dbReference type="OrthoDB" id="529at10239"/>
<dbReference type="Proteomes" id="UP000154597">
    <property type="component" value="Genome"/>
</dbReference>
<dbReference type="GO" id="GO:0042025">
    <property type="term" value="C:host cell nucleus"/>
    <property type="evidence" value="ECO:0007669"/>
    <property type="project" value="UniProtKB-SubCell"/>
</dbReference>
<dbReference type="GO" id="GO:0008408">
    <property type="term" value="F:3'-5' exonuclease activity"/>
    <property type="evidence" value="ECO:0007669"/>
    <property type="project" value="UniProtKB-UniRule"/>
</dbReference>
<dbReference type="GO" id="GO:0003677">
    <property type="term" value="F:DNA binding"/>
    <property type="evidence" value="ECO:0007669"/>
    <property type="project" value="UniProtKB-UniRule"/>
</dbReference>
<dbReference type="GO" id="GO:0003887">
    <property type="term" value="F:DNA-directed DNA polymerase activity"/>
    <property type="evidence" value="ECO:0007669"/>
    <property type="project" value="UniProtKB-UniRule"/>
</dbReference>
<dbReference type="GO" id="GO:0000166">
    <property type="term" value="F:nucleotide binding"/>
    <property type="evidence" value="ECO:0007669"/>
    <property type="project" value="UniProtKB-UniRule"/>
</dbReference>
<dbReference type="GO" id="GO:0006261">
    <property type="term" value="P:DNA-templated DNA replication"/>
    <property type="evidence" value="ECO:0007669"/>
    <property type="project" value="UniProtKB-UniRule"/>
</dbReference>
<dbReference type="GO" id="GO:0039693">
    <property type="term" value="P:viral DNA genome replication"/>
    <property type="evidence" value="ECO:0007669"/>
    <property type="project" value="UniProtKB-UniRule"/>
</dbReference>
<dbReference type="Gene3D" id="1.10.287.690">
    <property type="entry name" value="Helix hairpin bin"/>
    <property type="match status" value="1"/>
</dbReference>
<dbReference type="Gene3D" id="3.90.1600.10">
    <property type="entry name" value="Palm domain of DNA polymerase"/>
    <property type="match status" value="2"/>
</dbReference>
<dbReference type="Gene3D" id="3.30.1770.10">
    <property type="entry name" value="TPR 1 domain of DNA polymerase"/>
    <property type="match status" value="1"/>
</dbReference>
<dbReference type="HAMAP" id="MF_04055">
    <property type="entry name" value="ADV_DPOL"/>
    <property type="match status" value="1"/>
</dbReference>
<dbReference type="InterPro" id="IPR006172">
    <property type="entry name" value="DNA-dir_DNA_pol_B"/>
</dbReference>
<dbReference type="InterPro" id="IPR014382">
    <property type="entry name" value="DNA-dir_DNA_pol_B_adenovir"/>
</dbReference>
<dbReference type="InterPro" id="IPR017964">
    <property type="entry name" value="DNA-dir_DNA_pol_B_CS"/>
</dbReference>
<dbReference type="InterPro" id="IPR004868">
    <property type="entry name" value="DNA-dir_DNA_pol_B_mt/vir"/>
</dbReference>
<dbReference type="InterPro" id="IPR043502">
    <property type="entry name" value="DNA/RNA_pol_sf"/>
</dbReference>
<dbReference type="InterPro" id="IPR023211">
    <property type="entry name" value="DNA_pol_palm_dom_sf"/>
</dbReference>
<dbReference type="InterPro" id="IPR012337">
    <property type="entry name" value="RNaseH-like_sf"/>
</dbReference>
<dbReference type="Pfam" id="PF03175">
    <property type="entry name" value="DNA_pol_B_2"/>
    <property type="match status" value="1"/>
</dbReference>
<dbReference type="PIRSF" id="PIRSF000788">
    <property type="entry name" value="DPol_ADV"/>
    <property type="match status" value="1"/>
</dbReference>
<dbReference type="PRINTS" id="PR00106">
    <property type="entry name" value="DNAPOLB"/>
</dbReference>
<dbReference type="SMART" id="SM00486">
    <property type="entry name" value="POLBc"/>
    <property type="match status" value="1"/>
</dbReference>
<dbReference type="SUPFAM" id="SSF56672">
    <property type="entry name" value="DNA/RNA polymerases"/>
    <property type="match status" value="1"/>
</dbReference>
<dbReference type="SUPFAM" id="SSF53098">
    <property type="entry name" value="Ribonuclease H-like"/>
    <property type="match status" value="1"/>
</dbReference>
<dbReference type="PROSITE" id="PS00116">
    <property type="entry name" value="DNA_POLYMERASE_B"/>
    <property type="match status" value="1"/>
</dbReference>
<accession>O72539</accession>
<evidence type="ECO:0000250" key="1">
    <source>
        <dbReference type="UniProtKB" id="P03261"/>
    </source>
</evidence>
<evidence type="ECO:0000250" key="2">
    <source>
        <dbReference type="UniProtKB" id="P04495"/>
    </source>
</evidence>
<evidence type="ECO:0000255" key="3">
    <source>
        <dbReference type="HAMAP-Rule" id="MF_04055"/>
    </source>
</evidence>
<evidence type="ECO:0000305" key="4"/>
<organism>
    <name type="scientific">Bovine adenovirus 2</name>
    <name type="common">BAdV-2</name>
    <name type="synonym">Mastadenovirus bos2</name>
    <dbReference type="NCBI Taxonomy" id="114429"/>
    <lineage>
        <taxon>Viruses</taxon>
        <taxon>Varidnaviria</taxon>
        <taxon>Bamfordvirae</taxon>
        <taxon>Preplasmiviricota</taxon>
        <taxon>Tectiliviricetes</taxon>
        <taxon>Rowavirales</taxon>
        <taxon>Adenoviridae</taxon>
        <taxon>Mastadenovirus</taxon>
        <taxon>Ovine mastadenovirus A</taxon>
    </lineage>
</organism>
<proteinExistence type="inferred from homology"/>
<feature type="chain" id="PRO_0000046490" description="DNA polymerase">
    <location>
        <begin position="1"/>
        <end position="1017"/>
    </location>
</feature>
<organismHost>
    <name type="scientific">Bos taurus</name>
    <name type="common">Bovine</name>
    <dbReference type="NCBI Taxonomy" id="9913"/>
</organismHost>
<protein>
    <recommendedName>
        <fullName evidence="3">DNA polymerase</fullName>
        <ecNumber evidence="3">2.7.7.7</ecNumber>
    </recommendedName>
</protein>
<reference key="1">
    <citation type="journal article" date="1998" name="Intervirology">
        <title>Sequencing analysis of the region encoding the DNA polymerase of bovine adenovirus serotypes 2 and 3.</title>
        <authorList>
            <person name="Yagubi A."/>
            <person name="Ojkic D."/>
            <person name="Bautista D."/>
            <person name="Haj-Ahmad Y."/>
        </authorList>
    </citation>
    <scope>NUCLEOTIDE SEQUENCE [GENOMIC DNA]</scope>
    <source>
        <strain>19</strain>
    </source>
</reference>